<reference key="1">
    <citation type="journal article" date="2003" name="Mol. Microbiol.">
        <title>An integrated analysis of the genome of the hyperthermophilic archaeon Pyrococcus abyssi.</title>
        <authorList>
            <person name="Cohen G.N."/>
            <person name="Barbe V."/>
            <person name="Flament D."/>
            <person name="Galperin M."/>
            <person name="Heilig R."/>
            <person name="Lecompte O."/>
            <person name="Poch O."/>
            <person name="Prieur D."/>
            <person name="Querellou J."/>
            <person name="Ripp R."/>
            <person name="Thierry J.-C."/>
            <person name="Van der Oost J."/>
            <person name="Weissenbach J."/>
            <person name="Zivanovic Y."/>
            <person name="Forterre P."/>
        </authorList>
    </citation>
    <scope>NUCLEOTIDE SEQUENCE [LARGE SCALE GENOMIC DNA]</scope>
    <source>
        <strain>GE5 / Orsay</strain>
    </source>
</reference>
<reference key="2">
    <citation type="journal article" date="2012" name="Curr. Microbiol.">
        <title>Re-annotation of two hyperthermophilic archaea Pyrococcus abyssi GE5 and Pyrococcus furiosus DSM 3638.</title>
        <authorList>
            <person name="Gao J."/>
            <person name="Wang J."/>
        </authorList>
    </citation>
    <scope>GENOME REANNOTATION</scope>
    <source>
        <strain>GE5 / Orsay</strain>
    </source>
</reference>
<accession>Q9V0H5</accession>
<accession>G8ZH20</accession>
<comment type="function">
    <text evidence="1">Involved in cell shape control.</text>
</comment>
<comment type="subcellular location">
    <subcellularLocation>
        <location evidence="1">Cytoplasm</location>
    </subcellularLocation>
</comment>
<comment type="similarity">
    <text evidence="1">Belongs to the CetZ family.</text>
</comment>
<protein>
    <recommendedName>
        <fullName evidence="1">Tubulin-like protein CetZ</fullName>
    </recommendedName>
</protein>
<evidence type="ECO:0000255" key="1">
    <source>
        <dbReference type="HAMAP-Rule" id="MF_01946"/>
    </source>
</evidence>
<proteinExistence type="inferred from homology"/>
<gene>
    <name evidence="1" type="primary">cetZ</name>
    <name type="synonym">ftsZ-3</name>
    <name type="synonym">ftsZ3</name>
    <name type="ordered locus">PYRAB08140</name>
    <name type="ORF">PAB1820</name>
</gene>
<name>CETZ_PYRAB</name>
<dbReference type="EMBL" id="AJ248285">
    <property type="protein sequence ID" value="CAB49728.1"/>
    <property type="molecule type" value="Genomic_DNA"/>
</dbReference>
<dbReference type="EMBL" id="HE613800">
    <property type="protein sequence ID" value="CCE70215.1"/>
    <property type="molecule type" value="Genomic_DNA"/>
</dbReference>
<dbReference type="PIR" id="G75126">
    <property type="entry name" value="G75126"/>
</dbReference>
<dbReference type="RefSeq" id="WP_010867936.1">
    <property type="nucleotide sequence ID" value="NC_000868.1"/>
</dbReference>
<dbReference type="SMR" id="Q9V0H5"/>
<dbReference type="STRING" id="272844.PAB1820"/>
<dbReference type="KEGG" id="pab:PAB1820"/>
<dbReference type="PATRIC" id="fig|272844.11.peg.859"/>
<dbReference type="eggNOG" id="arCOG02202">
    <property type="taxonomic scope" value="Archaea"/>
</dbReference>
<dbReference type="HOGENOM" id="CLU_058152_0_0_2"/>
<dbReference type="OrthoDB" id="329751at2157"/>
<dbReference type="PhylomeDB" id="Q9V0H5"/>
<dbReference type="Proteomes" id="UP000000810">
    <property type="component" value="Chromosome"/>
</dbReference>
<dbReference type="Proteomes" id="UP000009139">
    <property type="component" value="Chromosome"/>
</dbReference>
<dbReference type="GO" id="GO:0032153">
    <property type="term" value="C:cell division site"/>
    <property type="evidence" value="ECO:0007669"/>
    <property type="project" value="TreeGrafter"/>
</dbReference>
<dbReference type="GO" id="GO:0005737">
    <property type="term" value="C:cytoplasm"/>
    <property type="evidence" value="ECO:0007669"/>
    <property type="project" value="UniProtKB-SubCell"/>
</dbReference>
<dbReference type="GO" id="GO:0005874">
    <property type="term" value="C:microtubule"/>
    <property type="evidence" value="ECO:0007669"/>
    <property type="project" value="InterPro"/>
</dbReference>
<dbReference type="GO" id="GO:0005525">
    <property type="term" value="F:GTP binding"/>
    <property type="evidence" value="ECO:0007669"/>
    <property type="project" value="UniProtKB-UniRule"/>
</dbReference>
<dbReference type="GO" id="GO:0003924">
    <property type="term" value="F:GTPase activity"/>
    <property type="evidence" value="ECO:0007669"/>
    <property type="project" value="InterPro"/>
</dbReference>
<dbReference type="GO" id="GO:0051301">
    <property type="term" value="P:cell division"/>
    <property type="evidence" value="ECO:0007669"/>
    <property type="project" value="TreeGrafter"/>
</dbReference>
<dbReference type="GO" id="GO:0007017">
    <property type="term" value="P:microtubule-based process"/>
    <property type="evidence" value="ECO:0007669"/>
    <property type="project" value="InterPro"/>
</dbReference>
<dbReference type="GO" id="GO:0008360">
    <property type="term" value="P:regulation of cell shape"/>
    <property type="evidence" value="ECO:0007669"/>
    <property type="project" value="UniProtKB-UniRule"/>
</dbReference>
<dbReference type="FunFam" id="3.40.50.1440:FF:000065">
    <property type="entry name" value="Tubulin-like protein CetZ"/>
    <property type="match status" value="1"/>
</dbReference>
<dbReference type="Gene3D" id="3.40.50.1440">
    <property type="entry name" value="Tubulin/FtsZ, GTPase domain"/>
    <property type="match status" value="1"/>
</dbReference>
<dbReference type="HAMAP" id="MF_01946">
    <property type="entry name" value="CetZ"/>
    <property type="match status" value="1"/>
</dbReference>
<dbReference type="InterPro" id="IPR032907">
    <property type="entry name" value="CetZ"/>
</dbReference>
<dbReference type="InterPro" id="IPR048737">
    <property type="entry name" value="CetZ_C"/>
</dbReference>
<dbReference type="InterPro" id="IPR045061">
    <property type="entry name" value="FtsZ/CetZ"/>
</dbReference>
<dbReference type="InterPro" id="IPR036525">
    <property type="entry name" value="Tubulin/FtsZ_GTPase_sf"/>
</dbReference>
<dbReference type="InterPro" id="IPR017975">
    <property type="entry name" value="Tubulin_CS"/>
</dbReference>
<dbReference type="InterPro" id="IPR003008">
    <property type="entry name" value="Tubulin_FtsZ_GTPase"/>
</dbReference>
<dbReference type="PANTHER" id="PTHR30314">
    <property type="entry name" value="CELL DIVISION PROTEIN FTSZ-RELATED"/>
    <property type="match status" value="1"/>
</dbReference>
<dbReference type="PANTHER" id="PTHR30314:SF10">
    <property type="entry name" value="TUBULIN-LIKE PROTEIN CETZ"/>
    <property type="match status" value="1"/>
</dbReference>
<dbReference type="Pfam" id="PF21011">
    <property type="entry name" value="CetZ_C"/>
    <property type="match status" value="1"/>
</dbReference>
<dbReference type="Pfam" id="PF00091">
    <property type="entry name" value="Tubulin"/>
    <property type="match status" value="1"/>
</dbReference>
<dbReference type="PRINTS" id="PR00423">
    <property type="entry name" value="CELLDVISFTSZ"/>
</dbReference>
<dbReference type="SMART" id="SM00864">
    <property type="entry name" value="Tubulin"/>
    <property type="match status" value="1"/>
</dbReference>
<dbReference type="SUPFAM" id="SSF52490">
    <property type="entry name" value="Tubulin nucleotide-binding domain-like"/>
    <property type="match status" value="1"/>
</dbReference>
<dbReference type="PROSITE" id="PS00227">
    <property type="entry name" value="TUBULIN"/>
    <property type="match status" value="1"/>
</dbReference>
<sequence>MRAIIIGIGQCGGKIADIFSLVDFEAIAINTSRGDLEYLKHIPQDKRILIGESIVGGKGVNANPVLGREAMKRDLPMVMKKINSMVGYEDVDIFFLTFGFGGGTGAGGTPVLAEALKEEYPDSLVVAIGALPLKEEGIRPTINAAITIDKLSKVVDSIIAIDNNKLKESDEDISQAYERINYTIVERIASLLALIDVPGEQTLDASDLKFVLRAMGSFATVGYAKADAEKVKSLSRLIIRSFENEGLYLDVSLESALYGLVAIHGPPEVLKAKDIFEALNELTQRIRGKQIFRGFYPDPRERSVEVVTLLSGIYESKSIEDIILTAKKYAREFMKAKEEGEAKKRELLSGLPDFDDVYSGEESEG</sequence>
<keyword id="KW-0133">Cell shape</keyword>
<keyword id="KW-0963">Cytoplasm</keyword>
<keyword id="KW-0342">GTP-binding</keyword>
<keyword id="KW-0547">Nucleotide-binding</keyword>
<feature type="chain" id="PRO_0000114413" description="Tubulin-like protein CetZ">
    <location>
        <begin position="1"/>
        <end position="365"/>
    </location>
</feature>
<feature type="binding site" evidence="1">
    <location>
        <begin position="10"/>
        <end position="14"/>
    </location>
    <ligand>
        <name>GTP</name>
        <dbReference type="ChEBI" id="CHEBI:37565"/>
    </ligand>
</feature>
<feature type="binding site" evidence="1">
    <location>
        <begin position="103"/>
        <end position="105"/>
    </location>
    <ligand>
        <name>GTP</name>
        <dbReference type="ChEBI" id="CHEBI:37565"/>
    </ligand>
</feature>
<feature type="binding site" evidence="1">
    <location>
        <position position="136"/>
    </location>
    <ligand>
        <name>GTP</name>
        <dbReference type="ChEBI" id="CHEBI:37565"/>
    </ligand>
</feature>
<feature type="binding site" evidence="1">
    <location>
        <position position="163"/>
    </location>
    <ligand>
        <name>GTP</name>
        <dbReference type="ChEBI" id="CHEBI:37565"/>
    </ligand>
</feature>
<feature type="binding site" evidence="1">
    <location>
        <position position="181"/>
    </location>
    <ligand>
        <name>GTP</name>
        <dbReference type="ChEBI" id="CHEBI:37565"/>
    </ligand>
</feature>
<organism>
    <name type="scientific">Pyrococcus abyssi (strain GE5 / Orsay)</name>
    <dbReference type="NCBI Taxonomy" id="272844"/>
    <lineage>
        <taxon>Archaea</taxon>
        <taxon>Methanobacteriati</taxon>
        <taxon>Methanobacteriota</taxon>
        <taxon>Thermococci</taxon>
        <taxon>Thermococcales</taxon>
        <taxon>Thermococcaceae</taxon>
        <taxon>Pyrococcus</taxon>
    </lineage>
</organism>